<feature type="chain" id="PRO_0000225092" description="UDP-N-acetylglucosamine--N-acetylmuramyl-(pentapeptide) pyrophosphoryl-undecaprenol N-acetylglucosamine transferase">
    <location>
        <begin position="1"/>
        <end position="355"/>
    </location>
</feature>
<feature type="binding site" evidence="1">
    <location>
        <begin position="15"/>
        <end position="17"/>
    </location>
    <ligand>
        <name>UDP-N-acetyl-alpha-D-glucosamine</name>
        <dbReference type="ChEBI" id="CHEBI:57705"/>
    </ligand>
</feature>
<feature type="binding site" evidence="1">
    <location>
        <position position="127"/>
    </location>
    <ligand>
        <name>UDP-N-acetyl-alpha-D-glucosamine</name>
        <dbReference type="ChEBI" id="CHEBI:57705"/>
    </ligand>
</feature>
<feature type="binding site" evidence="1">
    <location>
        <position position="163"/>
    </location>
    <ligand>
        <name>UDP-N-acetyl-alpha-D-glucosamine</name>
        <dbReference type="ChEBI" id="CHEBI:57705"/>
    </ligand>
</feature>
<feature type="binding site" evidence="1">
    <location>
        <position position="191"/>
    </location>
    <ligand>
        <name>UDP-N-acetyl-alpha-D-glucosamine</name>
        <dbReference type="ChEBI" id="CHEBI:57705"/>
    </ligand>
</feature>
<feature type="binding site" evidence="1">
    <location>
        <position position="244"/>
    </location>
    <ligand>
        <name>UDP-N-acetyl-alpha-D-glucosamine</name>
        <dbReference type="ChEBI" id="CHEBI:57705"/>
    </ligand>
</feature>
<feature type="binding site" evidence="1">
    <location>
        <begin position="263"/>
        <end position="268"/>
    </location>
    <ligand>
        <name>UDP-N-acetyl-alpha-D-glucosamine</name>
        <dbReference type="ChEBI" id="CHEBI:57705"/>
    </ligand>
</feature>
<feature type="binding site" evidence="1">
    <location>
        <position position="288"/>
    </location>
    <ligand>
        <name>UDP-N-acetyl-alpha-D-glucosamine</name>
        <dbReference type="ChEBI" id="CHEBI:57705"/>
    </ligand>
</feature>
<gene>
    <name evidence="1" type="primary">murG</name>
    <name type="ordered locus">SCH_0125</name>
</gene>
<protein>
    <recommendedName>
        <fullName evidence="1">UDP-N-acetylglucosamine--N-acetylmuramyl-(pentapeptide) pyrophosphoryl-undecaprenol N-acetylglucosamine transferase</fullName>
        <ecNumber evidence="1">2.4.1.227</ecNumber>
    </recommendedName>
    <alternativeName>
        <fullName evidence="1">Undecaprenyl-PP-MurNAc-pentapeptide-UDPGlcNAc GlcNAc transferase</fullName>
    </alternativeName>
</protein>
<proteinExistence type="inferred from homology"/>
<keyword id="KW-0131">Cell cycle</keyword>
<keyword id="KW-0132">Cell division</keyword>
<keyword id="KW-0997">Cell inner membrane</keyword>
<keyword id="KW-1003">Cell membrane</keyword>
<keyword id="KW-0133">Cell shape</keyword>
<keyword id="KW-0961">Cell wall biogenesis/degradation</keyword>
<keyword id="KW-0328">Glycosyltransferase</keyword>
<keyword id="KW-0472">Membrane</keyword>
<keyword id="KW-0573">Peptidoglycan synthesis</keyword>
<keyword id="KW-0808">Transferase</keyword>
<name>MURG_SALCH</name>
<organism>
    <name type="scientific">Salmonella choleraesuis (strain SC-B67)</name>
    <dbReference type="NCBI Taxonomy" id="321314"/>
    <lineage>
        <taxon>Bacteria</taxon>
        <taxon>Pseudomonadati</taxon>
        <taxon>Pseudomonadota</taxon>
        <taxon>Gammaproteobacteria</taxon>
        <taxon>Enterobacterales</taxon>
        <taxon>Enterobacteriaceae</taxon>
        <taxon>Salmonella</taxon>
    </lineage>
</organism>
<evidence type="ECO:0000255" key="1">
    <source>
        <dbReference type="HAMAP-Rule" id="MF_00033"/>
    </source>
</evidence>
<accession>Q57TD0</accession>
<comment type="function">
    <text evidence="1">Cell wall formation. Catalyzes the transfer of a GlcNAc subunit on undecaprenyl-pyrophosphoryl-MurNAc-pentapeptide (lipid intermediate I) to form undecaprenyl-pyrophosphoryl-MurNAc-(pentapeptide)GlcNAc (lipid intermediate II).</text>
</comment>
<comment type="catalytic activity">
    <reaction evidence="1">
        <text>di-trans,octa-cis-undecaprenyl diphospho-N-acetyl-alpha-D-muramoyl-L-alanyl-D-glutamyl-meso-2,6-diaminopimeloyl-D-alanyl-D-alanine + UDP-N-acetyl-alpha-D-glucosamine = di-trans,octa-cis-undecaprenyl diphospho-[N-acetyl-alpha-D-glucosaminyl-(1-&gt;4)]-N-acetyl-alpha-D-muramoyl-L-alanyl-D-glutamyl-meso-2,6-diaminopimeloyl-D-alanyl-D-alanine + UDP + H(+)</text>
        <dbReference type="Rhea" id="RHEA:31227"/>
        <dbReference type="ChEBI" id="CHEBI:15378"/>
        <dbReference type="ChEBI" id="CHEBI:57705"/>
        <dbReference type="ChEBI" id="CHEBI:58223"/>
        <dbReference type="ChEBI" id="CHEBI:61387"/>
        <dbReference type="ChEBI" id="CHEBI:61388"/>
        <dbReference type="EC" id="2.4.1.227"/>
    </reaction>
</comment>
<comment type="pathway">
    <text evidence="1">Cell wall biogenesis; peptidoglycan biosynthesis.</text>
</comment>
<comment type="subcellular location">
    <subcellularLocation>
        <location evidence="1">Cell inner membrane</location>
        <topology evidence="1">Peripheral membrane protein</topology>
        <orientation evidence="1">Cytoplasmic side</orientation>
    </subcellularLocation>
</comment>
<comment type="similarity">
    <text evidence="1">Belongs to the glycosyltransferase 28 family. MurG subfamily.</text>
</comment>
<dbReference type="EC" id="2.4.1.227" evidence="1"/>
<dbReference type="EMBL" id="AE017220">
    <property type="protein sequence ID" value="AAX64031.1"/>
    <property type="molecule type" value="Genomic_DNA"/>
</dbReference>
<dbReference type="RefSeq" id="WP_000016611.1">
    <property type="nucleotide sequence ID" value="NC_006905.1"/>
</dbReference>
<dbReference type="SMR" id="Q57TD0"/>
<dbReference type="CAZy" id="GT28">
    <property type="family name" value="Glycosyltransferase Family 28"/>
</dbReference>
<dbReference type="KEGG" id="sec:SCH_0125"/>
<dbReference type="HOGENOM" id="CLU_037404_2_0_6"/>
<dbReference type="UniPathway" id="UPA00219"/>
<dbReference type="Proteomes" id="UP000000538">
    <property type="component" value="Chromosome"/>
</dbReference>
<dbReference type="GO" id="GO:0005886">
    <property type="term" value="C:plasma membrane"/>
    <property type="evidence" value="ECO:0007669"/>
    <property type="project" value="UniProtKB-SubCell"/>
</dbReference>
<dbReference type="GO" id="GO:0051991">
    <property type="term" value="F:UDP-N-acetyl-D-glucosamine:N-acetylmuramoyl-L-alanyl-D-glutamyl-meso-2,6-diaminopimelyl-D-alanyl-D-alanine-diphosphoundecaprenol 4-beta-N-acetylglucosaminlytransferase activity"/>
    <property type="evidence" value="ECO:0007669"/>
    <property type="project" value="RHEA"/>
</dbReference>
<dbReference type="GO" id="GO:0050511">
    <property type="term" value="F:undecaprenyldiphospho-muramoylpentapeptide beta-N-acetylglucosaminyltransferase activity"/>
    <property type="evidence" value="ECO:0007669"/>
    <property type="project" value="UniProtKB-UniRule"/>
</dbReference>
<dbReference type="GO" id="GO:0005975">
    <property type="term" value="P:carbohydrate metabolic process"/>
    <property type="evidence" value="ECO:0007669"/>
    <property type="project" value="InterPro"/>
</dbReference>
<dbReference type="GO" id="GO:0051301">
    <property type="term" value="P:cell division"/>
    <property type="evidence" value="ECO:0007669"/>
    <property type="project" value="UniProtKB-KW"/>
</dbReference>
<dbReference type="GO" id="GO:0071555">
    <property type="term" value="P:cell wall organization"/>
    <property type="evidence" value="ECO:0007669"/>
    <property type="project" value="UniProtKB-KW"/>
</dbReference>
<dbReference type="GO" id="GO:0030259">
    <property type="term" value="P:lipid glycosylation"/>
    <property type="evidence" value="ECO:0007669"/>
    <property type="project" value="UniProtKB-UniRule"/>
</dbReference>
<dbReference type="GO" id="GO:0009252">
    <property type="term" value="P:peptidoglycan biosynthetic process"/>
    <property type="evidence" value="ECO:0007669"/>
    <property type="project" value="UniProtKB-UniRule"/>
</dbReference>
<dbReference type="GO" id="GO:0008360">
    <property type="term" value="P:regulation of cell shape"/>
    <property type="evidence" value="ECO:0007669"/>
    <property type="project" value="UniProtKB-KW"/>
</dbReference>
<dbReference type="CDD" id="cd03785">
    <property type="entry name" value="GT28_MurG"/>
    <property type="match status" value="1"/>
</dbReference>
<dbReference type="FunFam" id="3.40.50.2000:FF:000016">
    <property type="entry name" value="UDP-N-acetylglucosamine--N-acetylmuramyl-(pentapeptide) pyrophosphoryl-undecaprenol N-acetylglucosamine transferase"/>
    <property type="match status" value="1"/>
</dbReference>
<dbReference type="FunFam" id="3.40.50.2000:FF:000018">
    <property type="entry name" value="UDP-N-acetylglucosamine--N-acetylmuramyl-(pentapeptide) pyrophosphoryl-undecaprenol N-acetylglucosamine transferase"/>
    <property type="match status" value="1"/>
</dbReference>
<dbReference type="Gene3D" id="3.40.50.2000">
    <property type="entry name" value="Glycogen Phosphorylase B"/>
    <property type="match status" value="2"/>
</dbReference>
<dbReference type="HAMAP" id="MF_00033">
    <property type="entry name" value="MurG"/>
    <property type="match status" value="1"/>
</dbReference>
<dbReference type="InterPro" id="IPR006009">
    <property type="entry name" value="GlcNAc_MurG"/>
</dbReference>
<dbReference type="InterPro" id="IPR007235">
    <property type="entry name" value="Glyco_trans_28_C"/>
</dbReference>
<dbReference type="InterPro" id="IPR004276">
    <property type="entry name" value="GlycoTrans_28_N"/>
</dbReference>
<dbReference type="NCBIfam" id="TIGR01133">
    <property type="entry name" value="murG"/>
    <property type="match status" value="1"/>
</dbReference>
<dbReference type="PANTHER" id="PTHR21015:SF22">
    <property type="entry name" value="GLYCOSYLTRANSFERASE"/>
    <property type="match status" value="1"/>
</dbReference>
<dbReference type="PANTHER" id="PTHR21015">
    <property type="entry name" value="UDP-N-ACETYLGLUCOSAMINE--N-ACETYLMURAMYL-(PENTAPEPTIDE) PYROPHOSPHORYL-UNDECAPRENOL N-ACETYLGLUCOSAMINE TRANSFERASE 1"/>
    <property type="match status" value="1"/>
</dbReference>
<dbReference type="Pfam" id="PF04101">
    <property type="entry name" value="Glyco_tran_28_C"/>
    <property type="match status" value="1"/>
</dbReference>
<dbReference type="Pfam" id="PF03033">
    <property type="entry name" value="Glyco_transf_28"/>
    <property type="match status" value="1"/>
</dbReference>
<dbReference type="SUPFAM" id="SSF53756">
    <property type="entry name" value="UDP-Glycosyltransferase/glycogen phosphorylase"/>
    <property type="match status" value="1"/>
</dbReference>
<reference key="1">
    <citation type="journal article" date="2005" name="Nucleic Acids Res.">
        <title>The genome sequence of Salmonella enterica serovar Choleraesuis, a highly invasive and resistant zoonotic pathogen.</title>
        <authorList>
            <person name="Chiu C.-H."/>
            <person name="Tang P."/>
            <person name="Chu C."/>
            <person name="Hu S."/>
            <person name="Bao Q."/>
            <person name="Yu J."/>
            <person name="Chou Y.-Y."/>
            <person name="Wang H.-S."/>
            <person name="Lee Y.-S."/>
        </authorList>
    </citation>
    <scope>NUCLEOTIDE SEQUENCE [LARGE SCALE GENOMIC DNA]</scope>
    <source>
        <strain>SC-B67</strain>
    </source>
</reference>
<sequence>MSGQPKRLMVMAGGTGGHVFPGLAVAHHLMAQGWQVRWLGTADRMEADLVPKHGIDIDFIRISGLRGKGVKALLAAPLRIFNAWRQARAIMKRFKPDVVLGMGGYVSGPGGLAAWSLGIPVVLHEQNGIAGLTNQWLAKIATTVMQAFPGAFPNAEVVGNPVRTDVLALPLPQERLAGRDGPIRVLVVGGSQGARVLNQTMPQVAARLGDTVTIWHQSGKGAQHTVEQAYAGVGQPQHKVTEFIDDMAAAYAWADVVVCRSGALTVSEIAAAGLPAIFVPFQHKDRQQYWNALPLENAGAAKIFEQPQFTVEAVADTLAGWSREALLTMAERARAVSIPDATERVASEVSRVART</sequence>